<dbReference type="EC" id="2.7.1.12"/>
<dbReference type="EMBL" id="BC107923">
    <property type="protein sequence ID" value="AAI07924.1"/>
    <property type="molecule type" value="mRNA"/>
</dbReference>
<dbReference type="RefSeq" id="NP_001032439.1">
    <property type="nucleotide sequence ID" value="NM_001037362.1"/>
</dbReference>
<dbReference type="SMR" id="Q32PY9"/>
<dbReference type="FunCoup" id="Q32PY9">
    <property type="interactions" value="270"/>
</dbReference>
<dbReference type="STRING" id="10116.ENSRNOP00000026407"/>
<dbReference type="PhosphoSitePlus" id="Q32PY9"/>
<dbReference type="PaxDb" id="10116-ENSRNOP00000026407"/>
<dbReference type="Ensembl" id="ENSRNOT00000116956.1">
    <property type="protein sequence ID" value="ENSRNOP00000082724.1"/>
    <property type="gene ID" value="ENSRNOG00000019519.8"/>
</dbReference>
<dbReference type="GeneID" id="498695"/>
<dbReference type="KEGG" id="rno:498695"/>
<dbReference type="UCSC" id="RGD:1564546">
    <property type="organism name" value="rat"/>
</dbReference>
<dbReference type="AGR" id="RGD:1564546"/>
<dbReference type="CTD" id="414328"/>
<dbReference type="RGD" id="1564546">
    <property type="gene designation" value="Idnk"/>
</dbReference>
<dbReference type="eggNOG" id="KOG3354">
    <property type="taxonomic scope" value="Eukaryota"/>
</dbReference>
<dbReference type="GeneTree" id="ENSGT00390000003364"/>
<dbReference type="HOGENOM" id="CLU_077168_4_1_1"/>
<dbReference type="InParanoid" id="Q32PY9"/>
<dbReference type="OrthoDB" id="275177at2759"/>
<dbReference type="PhylomeDB" id="Q32PY9"/>
<dbReference type="TreeFam" id="TF315136"/>
<dbReference type="UniPathway" id="UPA00792"/>
<dbReference type="PRO" id="PR:Q32PY9"/>
<dbReference type="Proteomes" id="UP000002494">
    <property type="component" value="Chromosome 17"/>
</dbReference>
<dbReference type="Bgee" id="ENSRNOG00000019519">
    <property type="expression patterns" value="Expressed in kidney and 19 other cell types or tissues"/>
</dbReference>
<dbReference type="GO" id="GO:0005524">
    <property type="term" value="F:ATP binding"/>
    <property type="evidence" value="ECO:0007669"/>
    <property type="project" value="UniProtKB-KW"/>
</dbReference>
<dbReference type="GO" id="GO:0046316">
    <property type="term" value="F:gluconokinase activity"/>
    <property type="evidence" value="ECO:0000318"/>
    <property type="project" value="GO_Central"/>
</dbReference>
<dbReference type="GO" id="GO:0005975">
    <property type="term" value="P:carbohydrate metabolic process"/>
    <property type="evidence" value="ECO:0007669"/>
    <property type="project" value="InterPro"/>
</dbReference>
<dbReference type="CDD" id="cd02021">
    <property type="entry name" value="GntK"/>
    <property type="match status" value="1"/>
</dbReference>
<dbReference type="FunFam" id="3.40.50.300:FF:000522">
    <property type="entry name" value="Gluconokinase"/>
    <property type="match status" value="1"/>
</dbReference>
<dbReference type="Gene3D" id="3.40.50.300">
    <property type="entry name" value="P-loop containing nucleotide triphosphate hydrolases"/>
    <property type="match status" value="1"/>
</dbReference>
<dbReference type="InterPro" id="IPR027417">
    <property type="entry name" value="P-loop_NTPase"/>
</dbReference>
<dbReference type="InterPro" id="IPR031322">
    <property type="entry name" value="Shikimate/glucono_kinase"/>
</dbReference>
<dbReference type="InterPro" id="IPR006001">
    <property type="entry name" value="Therm_gnt_kin"/>
</dbReference>
<dbReference type="NCBIfam" id="TIGR01313">
    <property type="entry name" value="therm_gnt_kin"/>
    <property type="match status" value="1"/>
</dbReference>
<dbReference type="PANTHER" id="PTHR43442">
    <property type="entry name" value="GLUCONOKINASE-RELATED"/>
    <property type="match status" value="1"/>
</dbReference>
<dbReference type="PANTHER" id="PTHR43442:SF3">
    <property type="entry name" value="GLUCONOKINASE-RELATED"/>
    <property type="match status" value="1"/>
</dbReference>
<dbReference type="Pfam" id="PF01202">
    <property type="entry name" value="SKI"/>
    <property type="match status" value="1"/>
</dbReference>
<dbReference type="SUPFAM" id="SSF52540">
    <property type="entry name" value="P-loop containing nucleoside triphosphate hydrolases"/>
    <property type="match status" value="1"/>
</dbReference>
<evidence type="ECO:0000255" key="1"/>
<evidence type="ECO:0000305" key="2"/>
<proteinExistence type="evidence at transcript level"/>
<protein>
    <recommendedName>
        <fullName>Probable gluconokinase</fullName>
        <ecNumber>2.7.1.12</ecNumber>
    </recommendedName>
    <alternativeName>
        <fullName>Gluconate kinase</fullName>
    </alternativeName>
</protein>
<comment type="catalytic activity">
    <reaction>
        <text>D-gluconate + ATP = 6-phospho-D-gluconate + ADP + H(+)</text>
        <dbReference type="Rhea" id="RHEA:19433"/>
        <dbReference type="ChEBI" id="CHEBI:15378"/>
        <dbReference type="ChEBI" id="CHEBI:18391"/>
        <dbReference type="ChEBI" id="CHEBI:30616"/>
        <dbReference type="ChEBI" id="CHEBI:58759"/>
        <dbReference type="ChEBI" id="CHEBI:456216"/>
        <dbReference type="EC" id="2.7.1.12"/>
    </reaction>
</comment>
<comment type="pathway">
    <text>Carbohydrate acid metabolism; D-gluconate degradation.</text>
</comment>
<comment type="similarity">
    <text evidence="2">Belongs to the gluconokinase GntK/GntV family.</text>
</comment>
<name>GNTK_RAT</name>
<reference key="1">
    <citation type="journal article" date="2004" name="Genome Res.">
        <title>The status, quality, and expansion of the NIH full-length cDNA project: the Mammalian Gene Collection (MGC).</title>
        <authorList>
            <consortium name="The MGC Project Team"/>
        </authorList>
    </citation>
    <scope>NUCLEOTIDE SEQUENCE [LARGE SCALE MRNA]</scope>
    <source>
        <tissue>Placenta</tissue>
    </source>
</reference>
<sequence>METPGVLLVMGVSGSGKSTVGALLANKLGWKFYDADDYHSEENRIKMGKGVPLNDQDRIPWLCSLHDILLRDVASGQSVVLACSALKKMYRDILNRGGSDVPPRSDESAKEEPLAGGKFLVVHLCGSFELIYGRLLQRRGHFMPPELLQSQFSILEPPSAPENFIHISVDKGLPEIAAAVLEALK</sequence>
<keyword id="KW-0067">ATP-binding</keyword>
<keyword id="KW-0418">Kinase</keyword>
<keyword id="KW-0547">Nucleotide-binding</keyword>
<keyword id="KW-1185">Reference proteome</keyword>
<keyword id="KW-0808">Transferase</keyword>
<feature type="chain" id="PRO_0000327372" description="Probable gluconokinase">
    <location>
        <begin position="1"/>
        <end position="185"/>
    </location>
</feature>
<feature type="binding site" evidence="1">
    <location>
        <begin position="11"/>
        <end position="18"/>
    </location>
    <ligand>
        <name>ATP</name>
        <dbReference type="ChEBI" id="CHEBI:30616"/>
    </ligand>
</feature>
<gene>
    <name type="primary">Idnk</name>
</gene>
<organism>
    <name type="scientific">Rattus norvegicus</name>
    <name type="common">Rat</name>
    <dbReference type="NCBI Taxonomy" id="10116"/>
    <lineage>
        <taxon>Eukaryota</taxon>
        <taxon>Metazoa</taxon>
        <taxon>Chordata</taxon>
        <taxon>Craniata</taxon>
        <taxon>Vertebrata</taxon>
        <taxon>Euteleostomi</taxon>
        <taxon>Mammalia</taxon>
        <taxon>Eutheria</taxon>
        <taxon>Euarchontoglires</taxon>
        <taxon>Glires</taxon>
        <taxon>Rodentia</taxon>
        <taxon>Myomorpha</taxon>
        <taxon>Muroidea</taxon>
        <taxon>Muridae</taxon>
        <taxon>Murinae</taxon>
        <taxon>Rattus</taxon>
    </lineage>
</organism>
<accession>Q32PY9</accession>